<keyword id="KW-0067">ATP-binding</keyword>
<keyword id="KW-0963">Cytoplasm</keyword>
<keyword id="KW-0324">Glycolysis</keyword>
<keyword id="KW-0418">Kinase</keyword>
<keyword id="KW-0547">Nucleotide-binding</keyword>
<keyword id="KW-1185">Reference proteome</keyword>
<keyword id="KW-0808">Transferase</keyword>
<evidence type="ECO:0000255" key="1">
    <source>
        <dbReference type="HAMAP-Rule" id="MF_00145"/>
    </source>
</evidence>
<protein>
    <recommendedName>
        <fullName evidence="1">Phosphoglycerate kinase</fullName>
        <ecNumber evidence="1">2.7.2.3</ecNumber>
    </recommendedName>
</protein>
<organism>
    <name type="scientific">Clostridium botulinum (strain Hall / ATCC 3502 / NCTC 13319 / Type A)</name>
    <dbReference type="NCBI Taxonomy" id="441771"/>
    <lineage>
        <taxon>Bacteria</taxon>
        <taxon>Bacillati</taxon>
        <taxon>Bacillota</taxon>
        <taxon>Clostridia</taxon>
        <taxon>Eubacteriales</taxon>
        <taxon>Clostridiaceae</taxon>
        <taxon>Clostridium</taxon>
    </lineage>
</organism>
<gene>
    <name evidence="1" type="primary">pgk</name>
    <name type="ordered locus">CBO0227</name>
    <name type="ordered locus">CLC_0283</name>
</gene>
<feature type="chain" id="PRO_1000009607" description="Phosphoglycerate kinase">
    <location>
        <begin position="1"/>
        <end position="398"/>
    </location>
</feature>
<feature type="binding site" evidence="1">
    <location>
        <begin position="23"/>
        <end position="25"/>
    </location>
    <ligand>
        <name>substrate</name>
    </ligand>
</feature>
<feature type="binding site" evidence="1">
    <location>
        <position position="38"/>
    </location>
    <ligand>
        <name>substrate</name>
    </ligand>
</feature>
<feature type="binding site" evidence="1">
    <location>
        <begin position="61"/>
        <end position="64"/>
    </location>
    <ligand>
        <name>substrate</name>
    </ligand>
</feature>
<feature type="binding site" evidence="1">
    <location>
        <position position="122"/>
    </location>
    <ligand>
        <name>substrate</name>
    </ligand>
</feature>
<feature type="binding site" evidence="1">
    <location>
        <position position="155"/>
    </location>
    <ligand>
        <name>substrate</name>
    </ligand>
</feature>
<feature type="binding site" evidence="1">
    <location>
        <position position="206"/>
    </location>
    <ligand>
        <name>ATP</name>
        <dbReference type="ChEBI" id="CHEBI:30616"/>
    </ligand>
</feature>
<feature type="binding site" evidence="1">
    <location>
        <position position="297"/>
    </location>
    <ligand>
        <name>ATP</name>
        <dbReference type="ChEBI" id="CHEBI:30616"/>
    </ligand>
</feature>
<feature type="binding site" evidence="1">
    <location>
        <position position="328"/>
    </location>
    <ligand>
        <name>ATP</name>
        <dbReference type="ChEBI" id="CHEBI:30616"/>
    </ligand>
</feature>
<feature type="binding site" evidence="1">
    <location>
        <begin position="354"/>
        <end position="357"/>
    </location>
    <ligand>
        <name>ATP</name>
        <dbReference type="ChEBI" id="CHEBI:30616"/>
    </ligand>
</feature>
<sequence>MNYNKKSIEDIDVKGKKVLVRCDFNVPLNEGKITDENRLVGALPTIKYLMEKGAKIILCSHMGKPKGEPKKELSLLPVAKRLSEMLNKEVIFADDDNVVGENAKKAVEDMKDGDVVLLQNTRYRKEETKNEEVFSKELASLADVFVNDAFGTAHRAHCSTVGVTNYLKEAACGYLIQKELKFLGNAVEKPERPFVAILGGAKVSDKINVINNLLDKVDTLIIGGGMGYTFLKAQGYTIGNSLVEEDKVEYSKEMIDKAKEKGVNLLLPIDNVVADKFDKDASPVITEDQNIGEGYMGLDIGPKTAKIYSDAIKSAKTVVWNGPMGVFEFKSFANGTIEVAKAMADSDAVTIIGGGDSAAAVNILGFGDKMTHISTGGGASLEFLEGKELPGIAALNDK</sequence>
<name>PGK_CLOBH</name>
<proteinExistence type="inferred from homology"/>
<dbReference type="EC" id="2.7.2.3" evidence="1"/>
<dbReference type="EMBL" id="CP000727">
    <property type="protein sequence ID" value="ABS39087.1"/>
    <property type="molecule type" value="Genomic_DNA"/>
</dbReference>
<dbReference type="EMBL" id="AM412317">
    <property type="protein sequence ID" value="CAL81779.1"/>
    <property type="molecule type" value="Genomic_DNA"/>
</dbReference>
<dbReference type="RefSeq" id="WP_011948027.1">
    <property type="nucleotide sequence ID" value="NC_009698.1"/>
</dbReference>
<dbReference type="RefSeq" id="YP_001252771.1">
    <property type="nucleotide sequence ID" value="NC_009495.1"/>
</dbReference>
<dbReference type="RefSeq" id="YP_001386183.1">
    <property type="nucleotide sequence ID" value="NC_009698.1"/>
</dbReference>
<dbReference type="SMR" id="A5HYC0"/>
<dbReference type="GeneID" id="5187988"/>
<dbReference type="KEGG" id="cbh:CLC_0283"/>
<dbReference type="KEGG" id="cbo:CBO0227"/>
<dbReference type="PATRIC" id="fig|413999.7.peg.225"/>
<dbReference type="HOGENOM" id="CLU_025427_0_2_9"/>
<dbReference type="UniPathway" id="UPA00109">
    <property type="reaction ID" value="UER00185"/>
</dbReference>
<dbReference type="PRO" id="PR:A5HYC0"/>
<dbReference type="Proteomes" id="UP000001986">
    <property type="component" value="Chromosome"/>
</dbReference>
<dbReference type="GO" id="GO:0005829">
    <property type="term" value="C:cytosol"/>
    <property type="evidence" value="ECO:0000318"/>
    <property type="project" value="GO_Central"/>
</dbReference>
<dbReference type="GO" id="GO:0043531">
    <property type="term" value="F:ADP binding"/>
    <property type="evidence" value="ECO:0000318"/>
    <property type="project" value="GO_Central"/>
</dbReference>
<dbReference type="GO" id="GO:0005524">
    <property type="term" value="F:ATP binding"/>
    <property type="evidence" value="ECO:0000318"/>
    <property type="project" value="GO_Central"/>
</dbReference>
<dbReference type="GO" id="GO:0004618">
    <property type="term" value="F:phosphoglycerate kinase activity"/>
    <property type="evidence" value="ECO:0000318"/>
    <property type="project" value="GO_Central"/>
</dbReference>
<dbReference type="GO" id="GO:0006094">
    <property type="term" value="P:gluconeogenesis"/>
    <property type="evidence" value="ECO:0000318"/>
    <property type="project" value="GO_Central"/>
</dbReference>
<dbReference type="GO" id="GO:0006096">
    <property type="term" value="P:glycolytic process"/>
    <property type="evidence" value="ECO:0000318"/>
    <property type="project" value="GO_Central"/>
</dbReference>
<dbReference type="CDD" id="cd00318">
    <property type="entry name" value="Phosphoglycerate_kinase"/>
    <property type="match status" value="1"/>
</dbReference>
<dbReference type="FunFam" id="3.40.50.1260:FF:000007">
    <property type="entry name" value="Phosphoglycerate kinase"/>
    <property type="match status" value="1"/>
</dbReference>
<dbReference type="FunFam" id="3.40.50.1260:FF:000008">
    <property type="entry name" value="Phosphoglycerate kinase"/>
    <property type="match status" value="1"/>
</dbReference>
<dbReference type="Gene3D" id="3.40.50.1260">
    <property type="entry name" value="Phosphoglycerate kinase, N-terminal domain"/>
    <property type="match status" value="2"/>
</dbReference>
<dbReference type="HAMAP" id="MF_00145">
    <property type="entry name" value="Phosphoglyc_kinase"/>
    <property type="match status" value="1"/>
</dbReference>
<dbReference type="InterPro" id="IPR001576">
    <property type="entry name" value="Phosphoglycerate_kinase"/>
</dbReference>
<dbReference type="InterPro" id="IPR015911">
    <property type="entry name" value="Phosphoglycerate_kinase_CS"/>
</dbReference>
<dbReference type="InterPro" id="IPR015824">
    <property type="entry name" value="Phosphoglycerate_kinase_N"/>
</dbReference>
<dbReference type="InterPro" id="IPR036043">
    <property type="entry name" value="Phosphoglycerate_kinase_sf"/>
</dbReference>
<dbReference type="PANTHER" id="PTHR11406">
    <property type="entry name" value="PHOSPHOGLYCERATE KINASE"/>
    <property type="match status" value="1"/>
</dbReference>
<dbReference type="PANTHER" id="PTHR11406:SF23">
    <property type="entry name" value="PHOSPHOGLYCERATE KINASE 1, CHLOROPLASTIC-RELATED"/>
    <property type="match status" value="1"/>
</dbReference>
<dbReference type="Pfam" id="PF00162">
    <property type="entry name" value="PGK"/>
    <property type="match status" value="1"/>
</dbReference>
<dbReference type="PIRSF" id="PIRSF000724">
    <property type="entry name" value="Pgk"/>
    <property type="match status" value="1"/>
</dbReference>
<dbReference type="PRINTS" id="PR00477">
    <property type="entry name" value="PHGLYCKINASE"/>
</dbReference>
<dbReference type="SUPFAM" id="SSF53748">
    <property type="entry name" value="Phosphoglycerate kinase"/>
    <property type="match status" value="1"/>
</dbReference>
<dbReference type="PROSITE" id="PS00111">
    <property type="entry name" value="PGLYCERATE_KINASE"/>
    <property type="match status" value="1"/>
</dbReference>
<accession>A5HYC0</accession>
<accession>A7FZK4</accession>
<comment type="catalytic activity">
    <reaction evidence="1">
        <text>(2R)-3-phosphoglycerate + ATP = (2R)-3-phospho-glyceroyl phosphate + ADP</text>
        <dbReference type="Rhea" id="RHEA:14801"/>
        <dbReference type="ChEBI" id="CHEBI:30616"/>
        <dbReference type="ChEBI" id="CHEBI:57604"/>
        <dbReference type="ChEBI" id="CHEBI:58272"/>
        <dbReference type="ChEBI" id="CHEBI:456216"/>
        <dbReference type="EC" id="2.7.2.3"/>
    </reaction>
</comment>
<comment type="pathway">
    <text evidence="1">Carbohydrate degradation; glycolysis; pyruvate from D-glyceraldehyde 3-phosphate: step 2/5.</text>
</comment>
<comment type="subunit">
    <text evidence="1">Monomer.</text>
</comment>
<comment type="subcellular location">
    <subcellularLocation>
        <location evidence="1">Cytoplasm</location>
    </subcellularLocation>
</comment>
<comment type="similarity">
    <text evidence="1">Belongs to the phosphoglycerate kinase family.</text>
</comment>
<reference key="1">
    <citation type="journal article" date="2007" name="Genome Res.">
        <title>Genome sequence of a proteolytic (Group I) Clostridium botulinum strain Hall A and comparative analysis of the clostridial genomes.</title>
        <authorList>
            <person name="Sebaihia M."/>
            <person name="Peck M.W."/>
            <person name="Minton N.P."/>
            <person name="Thomson N.R."/>
            <person name="Holden M.T.G."/>
            <person name="Mitchell W.J."/>
            <person name="Carter A.T."/>
            <person name="Bentley S.D."/>
            <person name="Mason D.R."/>
            <person name="Crossman L."/>
            <person name="Paul C.J."/>
            <person name="Ivens A."/>
            <person name="Wells-Bennik M.H.J."/>
            <person name="Davis I.J."/>
            <person name="Cerdeno-Tarraga A.M."/>
            <person name="Churcher C."/>
            <person name="Quail M.A."/>
            <person name="Chillingworth T."/>
            <person name="Feltwell T."/>
            <person name="Fraser A."/>
            <person name="Goodhead I."/>
            <person name="Hance Z."/>
            <person name="Jagels K."/>
            <person name="Larke N."/>
            <person name="Maddison M."/>
            <person name="Moule S."/>
            <person name="Mungall K."/>
            <person name="Norbertczak H."/>
            <person name="Rabbinowitsch E."/>
            <person name="Sanders M."/>
            <person name="Simmonds M."/>
            <person name="White B."/>
            <person name="Whithead S."/>
            <person name="Parkhill J."/>
        </authorList>
    </citation>
    <scope>NUCLEOTIDE SEQUENCE [LARGE SCALE GENOMIC DNA]</scope>
    <source>
        <strain>Hall / ATCC 3502 / NCTC 13319 / Type A</strain>
    </source>
</reference>
<reference key="2">
    <citation type="journal article" date="2007" name="PLoS ONE">
        <title>Analysis of the neurotoxin complex genes in Clostridium botulinum A1-A4 and B1 strains: BoNT/A3, /Ba4 and /B1 clusters are located within plasmids.</title>
        <authorList>
            <person name="Smith T.J."/>
            <person name="Hill K.K."/>
            <person name="Foley B.T."/>
            <person name="Detter J.C."/>
            <person name="Munk A.C."/>
            <person name="Bruce D.C."/>
            <person name="Doggett N.A."/>
            <person name="Smith L.A."/>
            <person name="Marks J.D."/>
            <person name="Xie G."/>
            <person name="Brettin T.S."/>
        </authorList>
    </citation>
    <scope>NUCLEOTIDE SEQUENCE [LARGE SCALE GENOMIC DNA]</scope>
    <source>
        <strain>Hall / ATCC 3502 / NCTC 13319 / Type A</strain>
    </source>
</reference>